<dbReference type="EC" id="3.6.1.54" evidence="1"/>
<dbReference type="EMBL" id="AM286415">
    <property type="protein sequence ID" value="CAL13086.1"/>
    <property type="molecule type" value="Genomic_DNA"/>
</dbReference>
<dbReference type="RefSeq" id="WP_005167787.1">
    <property type="nucleotide sequence ID" value="NC_008800.1"/>
</dbReference>
<dbReference type="RefSeq" id="YP_001007233.1">
    <property type="nucleotide sequence ID" value="NC_008800.1"/>
</dbReference>
<dbReference type="SMR" id="A1JNQ2"/>
<dbReference type="KEGG" id="yen:YE3050"/>
<dbReference type="PATRIC" id="fig|393305.7.peg.3246"/>
<dbReference type="eggNOG" id="COG2908">
    <property type="taxonomic scope" value="Bacteria"/>
</dbReference>
<dbReference type="HOGENOM" id="CLU_074586_0_0_6"/>
<dbReference type="OrthoDB" id="9783283at2"/>
<dbReference type="UniPathway" id="UPA00359">
    <property type="reaction ID" value="UER00480"/>
</dbReference>
<dbReference type="Proteomes" id="UP000000642">
    <property type="component" value="Chromosome"/>
</dbReference>
<dbReference type="GO" id="GO:0005737">
    <property type="term" value="C:cytoplasm"/>
    <property type="evidence" value="ECO:0007669"/>
    <property type="project" value="InterPro"/>
</dbReference>
<dbReference type="GO" id="GO:0019897">
    <property type="term" value="C:extrinsic component of plasma membrane"/>
    <property type="evidence" value="ECO:0007669"/>
    <property type="project" value="UniProtKB-UniRule"/>
</dbReference>
<dbReference type="GO" id="GO:0030145">
    <property type="term" value="F:manganese ion binding"/>
    <property type="evidence" value="ECO:0007669"/>
    <property type="project" value="UniProtKB-UniRule"/>
</dbReference>
<dbReference type="GO" id="GO:0008758">
    <property type="term" value="F:UDP-2,3-diacylglucosamine hydrolase activity"/>
    <property type="evidence" value="ECO:0007669"/>
    <property type="project" value="UniProtKB-UniRule"/>
</dbReference>
<dbReference type="GO" id="GO:0009245">
    <property type="term" value="P:lipid A biosynthetic process"/>
    <property type="evidence" value="ECO:0007669"/>
    <property type="project" value="UniProtKB-UniRule"/>
</dbReference>
<dbReference type="CDD" id="cd07398">
    <property type="entry name" value="MPP_YbbF-LpxH"/>
    <property type="match status" value="1"/>
</dbReference>
<dbReference type="Gene3D" id="3.60.21.10">
    <property type="match status" value="1"/>
</dbReference>
<dbReference type="HAMAP" id="MF_00575">
    <property type="entry name" value="LpxH"/>
    <property type="match status" value="1"/>
</dbReference>
<dbReference type="InterPro" id="IPR004843">
    <property type="entry name" value="Calcineurin-like_PHP_ApaH"/>
</dbReference>
<dbReference type="InterPro" id="IPR043461">
    <property type="entry name" value="LpxH-like"/>
</dbReference>
<dbReference type="InterPro" id="IPR029052">
    <property type="entry name" value="Metallo-depent_PP-like"/>
</dbReference>
<dbReference type="InterPro" id="IPR010138">
    <property type="entry name" value="UDP-diacylglucosamine_Hdrlase"/>
</dbReference>
<dbReference type="NCBIfam" id="TIGR01854">
    <property type="entry name" value="lipid_A_lpxH"/>
    <property type="match status" value="1"/>
</dbReference>
<dbReference type="NCBIfam" id="NF003743">
    <property type="entry name" value="PRK05340.1"/>
    <property type="match status" value="1"/>
</dbReference>
<dbReference type="PANTHER" id="PTHR34990:SF1">
    <property type="entry name" value="UDP-2,3-DIACYLGLUCOSAMINE HYDROLASE"/>
    <property type="match status" value="1"/>
</dbReference>
<dbReference type="PANTHER" id="PTHR34990">
    <property type="entry name" value="UDP-2,3-DIACYLGLUCOSAMINE HYDROLASE-RELATED"/>
    <property type="match status" value="1"/>
</dbReference>
<dbReference type="Pfam" id="PF00149">
    <property type="entry name" value="Metallophos"/>
    <property type="match status" value="1"/>
</dbReference>
<dbReference type="SUPFAM" id="SSF56300">
    <property type="entry name" value="Metallo-dependent phosphatases"/>
    <property type="match status" value="1"/>
</dbReference>
<evidence type="ECO:0000255" key="1">
    <source>
        <dbReference type="HAMAP-Rule" id="MF_00575"/>
    </source>
</evidence>
<name>LPXH_YERE8</name>
<accession>A1JNQ2</accession>
<protein>
    <recommendedName>
        <fullName evidence="1">UDP-2,3-diacylglucosamine hydrolase</fullName>
        <ecNumber evidence="1">3.6.1.54</ecNumber>
    </recommendedName>
    <alternativeName>
        <fullName evidence="1">UDP-2,3-diacylglucosamine diphosphatase</fullName>
    </alternativeName>
</protein>
<organism>
    <name type="scientific">Yersinia enterocolitica serotype O:8 / biotype 1B (strain NCTC 13174 / 8081)</name>
    <dbReference type="NCBI Taxonomy" id="393305"/>
    <lineage>
        <taxon>Bacteria</taxon>
        <taxon>Pseudomonadati</taxon>
        <taxon>Pseudomonadota</taxon>
        <taxon>Gammaproteobacteria</taxon>
        <taxon>Enterobacterales</taxon>
        <taxon>Yersiniaceae</taxon>
        <taxon>Yersinia</taxon>
    </lineage>
</organism>
<comment type="function">
    <text evidence="1">Hydrolyzes the pyrophosphate bond of UDP-2,3-diacylglucosamine to yield 2,3-diacylglucosamine 1-phosphate (lipid X) and UMP by catalyzing the attack of water at the alpha-P atom. Involved in the biosynthesis of lipid A, a phosphorylated glycolipid that anchors the lipopolysaccharide to the outer membrane of the cell.</text>
</comment>
<comment type="catalytic activity">
    <reaction evidence="1">
        <text>UDP-2-N,3-O-bis[(3R)-3-hydroxytetradecanoyl]-alpha-D-glucosamine + H2O = 2-N,3-O-bis[(3R)-3-hydroxytetradecanoyl]-alpha-D-glucosaminyl 1-phosphate + UMP + 2 H(+)</text>
        <dbReference type="Rhea" id="RHEA:25213"/>
        <dbReference type="ChEBI" id="CHEBI:15377"/>
        <dbReference type="ChEBI" id="CHEBI:15378"/>
        <dbReference type="ChEBI" id="CHEBI:57865"/>
        <dbReference type="ChEBI" id="CHEBI:57957"/>
        <dbReference type="ChEBI" id="CHEBI:78847"/>
        <dbReference type="EC" id="3.6.1.54"/>
    </reaction>
</comment>
<comment type="cofactor">
    <cofactor evidence="1">
        <name>Mn(2+)</name>
        <dbReference type="ChEBI" id="CHEBI:29035"/>
    </cofactor>
    <text evidence="1">Binds 2 Mn(2+) ions per subunit in a binuclear metal center.</text>
</comment>
<comment type="pathway">
    <text evidence="1">Glycolipid biosynthesis; lipid IV(A) biosynthesis; lipid IV(A) from (3R)-3-hydroxytetradecanoyl-[acyl-carrier-protein] and UDP-N-acetyl-alpha-D-glucosamine: step 4/6.</text>
</comment>
<comment type="subcellular location">
    <subcellularLocation>
        <location evidence="1">Cell inner membrane</location>
        <topology evidence="1">Peripheral membrane protein</topology>
        <orientation evidence="1">Cytoplasmic side</orientation>
    </subcellularLocation>
</comment>
<comment type="similarity">
    <text evidence="1">Belongs to the LpxH family.</text>
</comment>
<gene>
    <name evidence="1" type="primary">lpxH</name>
    <name type="ordered locus">YE3050</name>
</gene>
<reference key="1">
    <citation type="journal article" date="2006" name="PLoS Genet.">
        <title>The complete genome sequence and comparative genome analysis of the high pathogenicity Yersinia enterocolitica strain 8081.</title>
        <authorList>
            <person name="Thomson N.R."/>
            <person name="Howard S."/>
            <person name="Wren B.W."/>
            <person name="Holden M.T.G."/>
            <person name="Crossman L."/>
            <person name="Challis G.L."/>
            <person name="Churcher C."/>
            <person name="Mungall K."/>
            <person name="Brooks K."/>
            <person name="Chillingworth T."/>
            <person name="Feltwell T."/>
            <person name="Abdellah Z."/>
            <person name="Hauser H."/>
            <person name="Jagels K."/>
            <person name="Maddison M."/>
            <person name="Moule S."/>
            <person name="Sanders M."/>
            <person name="Whitehead S."/>
            <person name="Quail M.A."/>
            <person name="Dougan G."/>
            <person name="Parkhill J."/>
            <person name="Prentice M.B."/>
        </authorList>
    </citation>
    <scope>NUCLEOTIDE SEQUENCE [LARGE SCALE GENOMIC DNA]</scope>
    <source>
        <strain>NCTC 13174 / 8081</strain>
    </source>
</reference>
<proteinExistence type="inferred from homology"/>
<keyword id="KW-0997">Cell inner membrane</keyword>
<keyword id="KW-1003">Cell membrane</keyword>
<keyword id="KW-0378">Hydrolase</keyword>
<keyword id="KW-0441">Lipid A biosynthesis</keyword>
<keyword id="KW-0444">Lipid biosynthesis</keyword>
<keyword id="KW-0443">Lipid metabolism</keyword>
<keyword id="KW-0464">Manganese</keyword>
<keyword id="KW-0472">Membrane</keyword>
<keyword id="KW-0479">Metal-binding</keyword>
<sequence length="240" mass="27428">MSTLFIADLHLSVQEPAITAGFLHFIQREAIHADALYILGDLFESWIGDDDPEPLYRQIAAALKSLQQHGVPCYFIHGNRDFLLGKRFAVESGMTLLPEEKVVDLYGRKIVILHGDTLCTDDADYQHFRRRVHNPIIQKLFLWLPLRFRLRIAAYMRNQSQQNNSGKSQLIMDVNPHAVVETFERNSVSWMIHGHTHRPAVHTVELASTTAHRVVLGAWHVEGSMVKVTADKVELIKFPF</sequence>
<feature type="chain" id="PRO_1000025099" description="UDP-2,3-diacylglucosamine hydrolase">
    <location>
        <begin position="1"/>
        <end position="240"/>
    </location>
</feature>
<feature type="binding site" evidence="1">
    <location>
        <position position="8"/>
    </location>
    <ligand>
        <name>Mn(2+)</name>
        <dbReference type="ChEBI" id="CHEBI:29035"/>
        <label>1</label>
    </ligand>
</feature>
<feature type="binding site" evidence="1">
    <location>
        <position position="10"/>
    </location>
    <ligand>
        <name>Mn(2+)</name>
        <dbReference type="ChEBI" id="CHEBI:29035"/>
        <label>1</label>
    </ligand>
</feature>
<feature type="binding site" evidence="1">
    <location>
        <position position="41"/>
    </location>
    <ligand>
        <name>Mn(2+)</name>
        <dbReference type="ChEBI" id="CHEBI:29035"/>
        <label>1</label>
    </ligand>
</feature>
<feature type="binding site" evidence="1">
    <location>
        <position position="41"/>
    </location>
    <ligand>
        <name>Mn(2+)</name>
        <dbReference type="ChEBI" id="CHEBI:29035"/>
        <label>2</label>
    </ligand>
</feature>
<feature type="binding site" evidence="1">
    <location>
        <begin position="79"/>
        <end position="80"/>
    </location>
    <ligand>
        <name>substrate</name>
    </ligand>
</feature>
<feature type="binding site" evidence="1">
    <location>
        <position position="79"/>
    </location>
    <ligand>
        <name>Mn(2+)</name>
        <dbReference type="ChEBI" id="CHEBI:29035"/>
        <label>2</label>
    </ligand>
</feature>
<feature type="binding site" evidence="1">
    <location>
        <position position="114"/>
    </location>
    <ligand>
        <name>Mn(2+)</name>
        <dbReference type="ChEBI" id="CHEBI:29035"/>
        <label>2</label>
    </ligand>
</feature>
<feature type="binding site" evidence="1">
    <location>
        <position position="122"/>
    </location>
    <ligand>
        <name>substrate</name>
    </ligand>
</feature>
<feature type="binding site" evidence="1">
    <location>
        <position position="160"/>
    </location>
    <ligand>
        <name>substrate</name>
    </ligand>
</feature>
<feature type="binding site" evidence="1">
    <location>
        <position position="164"/>
    </location>
    <ligand>
        <name>substrate</name>
    </ligand>
</feature>
<feature type="binding site" evidence="1">
    <location>
        <position position="167"/>
    </location>
    <ligand>
        <name>substrate</name>
    </ligand>
</feature>
<feature type="binding site" evidence="1">
    <location>
        <position position="195"/>
    </location>
    <ligand>
        <name>Mn(2+)</name>
        <dbReference type="ChEBI" id="CHEBI:29035"/>
        <label>2</label>
    </ligand>
</feature>
<feature type="binding site" evidence="1">
    <location>
        <position position="195"/>
    </location>
    <ligand>
        <name>substrate</name>
    </ligand>
</feature>
<feature type="binding site" evidence="1">
    <location>
        <position position="197"/>
    </location>
    <ligand>
        <name>Mn(2+)</name>
        <dbReference type="ChEBI" id="CHEBI:29035"/>
        <label>1</label>
    </ligand>
</feature>